<dbReference type="EC" id="6.3.2.1" evidence="1"/>
<dbReference type="EMBL" id="BX571857">
    <property type="protein sequence ID" value="CAG44299.1"/>
    <property type="molecule type" value="Genomic_DNA"/>
</dbReference>
<dbReference type="RefSeq" id="WP_000163742.1">
    <property type="nucleotide sequence ID" value="NC_002953.3"/>
</dbReference>
<dbReference type="SMR" id="Q6G678"/>
<dbReference type="KEGG" id="sas:SAS2483"/>
<dbReference type="HOGENOM" id="CLU_047148_0_0_9"/>
<dbReference type="UniPathway" id="UPA00028">
    <property type="reaction ID" value="UER00005"/>
</dbReference>
<dbReference type="GO" id="GO:0005829">
    <property type="term" value="C:cytosol"/>
    <property type="evidence" value="ECO:0007669"/>
    <property type="project" value="TreeGrafter"/>
</dbReference>
<dbReference type="GO" id="GO:0005524">
    <property type="term" value="F:ATP binding"/>
    <property type="evidence" value="ECO:0007669"/>
    <property type="project" value="UniProtKB-KW"/>
</dbReference>
<dbReference type="GO" id="GO:0004592">
    <property type="term" value="F:pantoate-beta-alanine ligase activity"/>
    <property type="evidence" value="ECO:0007669"/>
    <property type="project" value="UniProtKB-UniRule"/>
</dbReference>
<dbReference type="GO" id="GO:0015940">
    <property type="term" value="P:pantothenate biosynthetic process"/>
    <property type="evidence" value="ECO:0007669"/>
    <property type="project" value="UniProtKB-UniRule"/>
</dbReference>
<dbReference type="CDD" id="cd00560">
    <property type="entry name" value="PanC"/>
    <property type="match status" value="1"/>
</dbReference>
<dbReference type="FunFam" id="3.30.1300.10:FF:000001">
    <property type="entry name" value="Pantothenate synthetase"/>
    <property type="match status" value="1"/>
</dbReference>
<dbReference type="FunFam" id="3.40.50.620:FF:000013">
    <property type="entry name" value="Pantothenate synthetase"/>
    <property type="match status" value="1"/>
</dbReference>
<dbReference type="Gene3D" id="3.40.50.620">
    <property type="entry name" value="HUPs"/>
    <property type="match status" value="1"/>
</dbReference>
<dbReference type="Gene3D" id="3.30.1300.10">
    <property type="entry name" value="Pantoate-beta-alanine ligase, C-terminal domain"/>
    <property type="match status" value="1"/>
</dbReference>
<dbReference type="HAMAP" id="MF_00158">
    <property type="entry name" value="PanC"/>
    <property type="match status" value="1"/>
</dbReference>
<dbReference type="InterPro" id="IPR003721">
    <property type="entry name" value="Pantoate_ligase"/>
</dbReference>
<dbReference type="InterPro" id="IPR042176">
    <property type="entry name" value="Pantoate_ligase_C"/>
</dbReference>
<dbReference type="InterPro" id="IPR014729">
    <property type="entry name" value="Rossmann-like_a/b/a_fold"/>
</dbReference>
<dbReference type="NCBIfam" id="TIGR00018">
    <property type="entry name" value="panC"/>
    <property type="match status" value="1"/>
</dbReference>
<dbReference type="PANTHER" id="PTHR21299">
    <property type="entry name" value="CYTIDYLATE KINASE/PANTOATE-BETA-ALANINE LIGASE"/>
    <property type="match status" value="1"/>
</dbReference>
<dbReference type="PANTHER" id="PTHR21299:SF1">
    <property type="entry name" value="PANTOATE--BETA-ALANINE LIGASE"/>
    <property type="match status" value="1"/>
</dbReference>
<dbReference type="Pfam" id="PF02569">
    <property type="entry name" value="Pantoate_ligase"/>
    <property type="match status" value="1"/>
</dbReference>
<dbReference type="SUPFAM" id="SSF52374">
    <property type="entry name" value="Nucleotidylyl transferase"/>
    <property type="match status" value="1"/>
</dbReference>
<reference key="1">
    <citation type="journal article" date="2004" name="Proc. Natl. Acad. Sci. U.S.A.">
        <title>Complete genomes of two clinical Staphylococcus aureus strains: evidence for the rapid evolution of virulence and drug resistance.</title>
        <authorList>
            <person name="Holden M.T.G."/>
            <person name="Feil E.J."/>
            <person name="Lindsay J.A."/>
            <person name="Peacock S.J."/>
            <person name="Day N.P.J."/>
            <person name="Enright M.C."/>
            <person name="Foster T.J."/>
            <person name="Moore C.E."/>
            <person name="Hurst L."/>
            <person name="Atkin R."/>
            <person name="Barron A."/>
            <person name="Bason N."/>
            <person name="Bentley S.D."/>
            <person name="Chillingworth C."/>
            <person name="Chillingworth T."/>
            <person name="Churcher C."/>
            <person name="Clark L."/>
            <person name="Corton C."/>
            <person name="Cronin A."/>
            <person name="Doggett J."/>
            <person name="Dowd L."/>
            <person name="Feltwell T."/>
            <person name="Hance Z."/>
            <person name="Harris B."/>
            <person name="Hauser H."/>
            <person name="Holroyd S."/>
            <person name="Jagels K."/>
            <person name="James K.D."/>
            <person name="Lennard N."/>
            <person name="Line A."/>
            <person name="Mayes R."/>
            <person name="Moule S."/>
            <person name="Mungall K."/>
            <person name="Ormond D."/>
            <person name="Quail M.A."/>
            <person name="Rabbinowitsch E."/>
            <person name="Rutherford K.M."/>
            <person name="Sanders M."/>
            <person name="Sharp S."/>
            <person name="Simmonds M."/>
            <person name="Stevens K."/>
            <person name="Whitehead S."/>
            <person name="Barrell B.G."/>
            <person name="Spratt B.G."/>
            <person name="Parkhill J."/>
        </authorList>
    </citation>
    <scope>NUCLEOTIDE SEQUENCE [LARGE SCALE GENOMIC DNA]</scope>
    <source>
        <strain>MSSA476</strain>
    </source>
</reference>
<protein>
    <recommendedName>
        <fullName evidence="1">Pantothenate synthetase</fullName>
        <shortName evidence="1">PS</shortName>
        <ecNumber evidence="1">6.3.2.1</ecNumber>
    </recommendedName>
    <alternativeName>
        <fullName evidence="1">Pantoate--beta-alanine ligase</fullName>
    </alternativeName>
    <alternativeName>
        <fullName evidence="1">Pantoate-activating enzyme</fullName>
    </alternativeName>
</protein>
<feature type="chain" id="PRO_0000128271" description="Pantothenate synthetase">
    <location>
        <begin position="1"/>
        <end position="283"/>
    </location>
</feature>
<feature type="active site" description="Proton donor" evidence="1">
    <location>
        <position position="38"/>
    </location>
</feature>
<feature type="binding site" evidence="1">
    <location>
        <begin position="31"/>
        <end position="38"/>
    </location>
    <ligand>
        <name>ATP</name>
        <dbReference type="ChEBI" id="CHEBI:30616"/>
    </ligand>
</feature>
<feature type="binding site" evidence="1">
    <location>
        <position position="62"/>
    </location>
    <ligand>
        <name>(R)-pantoate</name>
        <dbReference type="ChEBI" id="CHEBI:15980"/>
    </ligand>
</feature>
<feature type="binding site" evidence="1">
    <location>
        <position position="62"/>
    </location>
    <ligand>
        <name>beta-alanine</name>
        <dbReference type="ChEBI" id="CHEBI:57966"/>
    </ligand>
</feature>
<feature type="binding site" evidence="1">
    <location>
        <begin position="148"/>
        <end position="151"/>
    </location>
    <ligand>
        <name>ATP</name>
        <dbReference type="ChEBI" id="CHEBI:30616"/>
    </ligand>
</feature>
<feature type="binding site" evidence="1">
    <location>
        <position position="154"/>
    </location>
    <ligand>
        <name>(R)-pantoate</name>
        <dbReference type="ChEBI" id="CHEBI:15980"/>
    </ligand>
</feature>
<feature type="binding site" evidence="1">
    <location>
        <position position="177"/>
    </location>
    <ligand>
        <name>ATP</name>
        <dbReference type="ChEBI" id="CHEBI:30616"/>
    </ligand>
</feature>
<feature type="binding site" evidence="1">
    <location>
        <begin position="185"/>
        <end position="188"/>
    </location>
    <ligand>
        <name>ATP</name>
        <dbReference type="ChEBI" id="CHEBI:30616"/>
    </ligand>
</feature>
<gene>
    <name evidence="1" type="primary">panC</name>
    <name type="ordered locus">SAS2483</name>
</gene>
<proteinExistence type="inferred from homology"/>
<accession>Q6G678</accession>
<sequence length="283" mass="31448">MTKLITTVKEMQHIVKAAKRSGTTIGFIPTMGALHDGHLTMVRESVSTNDITVVSVFVNPLQFGPNEDFDAYPRQIDKDLELVSEVGADIVFHPAVEDMYPGELGIDVKVGPLADVLEGAKRPGHFDGVVTVVNKLFNIVMPDYAYFGKKDAQQLAIVEQMVKDFNHAVEIIGIDIVREADGLAKSSRNVYLTEQERQEAVHLSKSLLLAQALYQDGERQSKVIIDRVTEYLESHISGRIEEVAVYSYPQLVEQHEITGRIFISLAVKFSKARLIDNIIIGAE</sequence>
<comment type="function">
    <text evidence="1">Catalyzes the condensation of pantoate with beta-alanine in an ATP-dependent reaction via a pantoyl-adenylate intermediate.</text>
</comment>
<comment type="catalytic activity">
    <reaction evidence="1">
        <text>(R)-pantoate + beta-alanine + ATP = (R)-pantothenate + AMP + diphosphate + H(+)</text>
        <dbReference type="Rhea" id="RHEA:10912"/>
        <dbReference type="ChEBI" id="CHEBI:15378"/>
        <dbReference type="ChEBI" id="CHEBI:15980"/>
        <dbReference type="ChEBI" id="CHEBI:29032"/>
        <dbReference type="ChEBI" id="CHEBI:30616"/>
        <dbReference type="ChEBI" id="CHEBI:33019"/>
        <dbReference type="ChEBI" id="CHEBI:57966"/>
        <dbReference type="ChEBI" id="CHEBI:456215"/>
        <dbReference type="EC" id="6.3.2.1"/>
    </reaction>
</comment>
<comment type="pathway">
    <text evidence="1">Cofactor biosynthesis; (R)-pantothenate biosynthesis; (R)-pantothenate from (R)-pantoate and beta-alanine: step 1/1.</text>
</comment>
<comment type="subunit">
    <text evidence="1">Homodimer.</text>
</comment>
<comment type="subcellular location">
    <subcellularLocation>
        <location evidence="1">Cytoplasm</location>
    </subcellularLocation>
</comment>
<comment type="miscellaneous">
    <text evidence="1">The reaction proceeds by a bi uni uni bi ping pong mechanism.</text>
</comment>
<comment type="similarity">
    <text evidence="1">Belongs to the pantothenate synthetase family.</text>
</comment>
<name>PANC_STAAS</name>
<keyword id="KW-0067">ATP-binding</keyword>
<keyword id="KW-0963">Cytoplasm</keyword>
<keyword id="KW-0436">Ligase</keyword>
<keyword id="KW-0547">Nucleotide-binding</keyword>
<keyword id="KW-0566">Pantothenate biosynthesis</keyword>
<evidence type="ECO:0000255" key="1">
    <source>
        <dbReference type="HAMAP-Rule" id="MF_00158"/>
    </source>
</evidence>
<organism>
    <name type="scientific">Staphylococcus aureus (strain MSSA476)</name>
    <dbReference type="NCBI Taxonomy" id="282459"/>
    <lineage>
        <taxon>Bacteria</taxon>
        <taxon>Bacillati</taxon>
        <taxon>Bacillota</taxon>
        <taxon>Bacilli</taxon>
        <taxon>Bacillales</taxon>
        <taxon>Staphylococcaceae</taxon>
        <taxon>Staphylococcus</taxon>
    </lineage>
</organism>